<protein>
    <recommendedName>
        <fullName>Putative S-adenosyl-L-methionine-dependent methyltransferase Rv1896c</fullName>
        <ecNumber>2.1.1.-</ecNumber>
    </recommendedName>
</protein>
<organism>
    <name type="scientific">Mycobacterium tuberculosis (strain ATCC 25618 / H37Rv)</name>
    <dbReference type="NCBI Taxonomy" id="83332"/>
    <lineage>
        <taxon>Bacteria</taxon>
        <taxon>Bacillati</taxon>
        <taxon>Actinomycetota</taxon>
        <taxon>Actinomycetes</taxon>
        <taxon>Mycobacteriales</taxon>
        <taxon>Mycobacteriaceae</taxon>
        <taxon>Mycobacterium</taxon>
        <taxon>Mycobacterium tuberculosis complex</taxon>
    </lineage>
</organism>
<keyword id="KW-0489">Methyltransferase</keyword>
<keyword id="KW-1185">Reference proteome</keyword>
<keyword id="KW-0949">S-adenosyl-L-methionine</keyword>
<keyword id="KW-0808">Transferase</keyword>
<name>Y1947_MYCTU</name>
<comment type="function">
    <text evidence="1">Exhibits S-adenosyl-L-methionine-dependent methyltransferase activity.</text>
</comment>
<comment type="similarity">
    <text evidence="2">Belongs to the UPF0677 family.</text>
</comment>
<dbReference type="EC" id="2.1.1.-"/>
<dbReference type="EMBL" id="AL123456">
    <property type="protein sequence ID" value="CCP44663.1"/>
    <property type="molecule type" value="Genomic_DNA"/>
</dbReference>
<dbReference type="PIR" id="E70517">
    <property type="entry name" value="E70517"/>
</dbReference>
<dbReference type="RefSeq" id="NP_216412.1">
    <property type="nucleotide sequence ID" value="NC_000962.3"/>
</dbReference>
<dbReference type="RefSeq" id="WP_003409526.1">
    <property type="nucleotide sequence ID" value="NZ_NVQJ01000013.1"/>
</dbReference>
<dbReference type="SMR" id="P9WFH7"/>
<dbReference type="STRING" id="83332.Rv1896c"/>
<dbReference type="PaxDb" id="83332-Rv1896c"/>
<dbReference type="DNASU" id="885915"/>
<dbReference type="GeneID" id="885915"/>
<dbReference type="KEGG" id="mtu:Rv1896c"/>
<dbReference type="KEGG" id="mtv:RVBD_1896c"/>
<dbReference type="TubercuList" id="Rv1896c"/>
<dbReference type="eggNOG" id="COG3315">
    <property type="taxonomic scope" value="Bacteria"/>
</dbReference>
<dbReference type="InParanoid" id="P9WFH7"/>
<dbReference type="OrthoDB" id="9806164at2"/>
<dbReference type="PhylomeDB" id="P9WFH7"/>
<dbReference type="Proteomes" id="UP000001584">
    <property type="component" value="Chromosome"/>
</dbReference>
<dbReference type="GO" id="GO:0008168">
    <property type="term" value="F:methyltransferase activity"/>
    <property type="evidence" value="ECO:0007669"/>
    <property type="project" value="UniProtKB-KW"/>
</dbReference>
<dbReference type="GO" id="GO:0032259">
    <property type="term" value="P:methylation"/>
    <property type="evidence" value="ECO:0007669"/>
    <property type="project" value="UniProtKB-KW"/>
</dbReference>
<dbReference type="Gene3D" id="3.40.50.150">
    <property type="entry name" value="Vaccinia Virus protein VP39"/>
    <property type="match status" value="1"/>
</dbReference>
<dbReference type="InterPro" id="IPR007213">
    <property type="entry name" value="Ppm1/Ppm2/Tcmp"/>
</dbReference>
<dbReference type="InterPro" id="IPR029063">
    <property type="entry name" value="SAM-dependent_MTases_sf"/>
</dbReference>
<dbReference type="InterPro" id="IPR011610">
    <property type="entry name" value="SAM_mthyl_Trfase_ML2640-like"/>
</dbReference>
<dbReference type="NCBIfam" id="TIGR00027">
    <property type="entry name" value="mthyl_TIGR00027"/>
    <property type="match status" value="1"/>
</dbReference>
<dbReference type="PANTHER" id="PTHR43619">
    <property type="entry name" value="S-ADENOSYL-L-METHIONINE-DEPENDENT METHYLTRANSFERASE YKTD-RELATED"/>
    <property type="match status" value="1"/>
</dbReference>
<dbReference type="PANTHER" id="PTHR43619:SF2">
    <property type="entry name" value="S-ADENOSYL-L-METHIONINE-DEPENDENT METHYLTRANSFERASES SUPERFAMILY PROTEIN"/>
    <property type="match status" value="1"/>
</dbReference>
<dbReference type="Pfam" id="PF04072">
    <property type="entry name" value="LCM"/>
    <property type="match status" value="1"/>
</dbReference>
<dbReference type="SUPFAM" id="SSF53335">
    <property type="entry name" value="S-adenosyl-L-methionine-dependent methyltransferases"/>
    <property type="match status" value="1"/>
</dbReference>
<gene>
    <name type="ordered locus">Rv1896c</name>
</gene>
<accession>P9WFH7</accession>
<accession>L0T871</accession>
<accession>O07736</accession>
<accession>Q7D7T8</accession>
<sequence>MTTPEYGSLRSDDDHWDIVSNVGYTALLVAGWRALHTTGPKPLVQDEYAKHFITASADPYLEGLLANPRTSEDGTAFPRLYGVQTRFFDDFFNCADEAGIRQAVIVAAGLDCRAYRLDWQPGTTVFEIDVPKVLEFKARVLSERGAVPKAHRVAVPADLRTDWPTPLTAAGFDPQRPSAWSVEGLLPYLTGDAQYALFARIDELCAPGSRVALGALGSRLDHEQLAALETAHPGVNMSGDVNFSALTYDDKTDPVEWLVEHGWAVDPVRSTLELQVGYGLTPPDVDVKIDSFMRSQYITAVRA</sequence>
<feature type="chain" id="PRO_0000361238" description="Putative S-adenosyl-L-methionine-dependent methyltransferase Rv1896c">
    <location>
        <begin position="1"/>
        <end position="303"/>
    </location>
</feature>
<feature type="binding site" evidence="1">
    <location>
        <position position="129"/>
    </location>
    <ligand>
        <name>S-adenosyl-L-methionine</name>
        <dbReference type="ChEBI" id="CHEBI:59789"/>
    </ligand>
</feature>
<feature type="binding site" evidence="1">
    <location>
        <begin position="158"/>
        <end position="159"/>
    </location>
    <ligand>
        <name>S-adenosyl-L-methionine</name>
        <dbReference type="ChEBI" id="CHEBI:59789"/>
    </ligand>
</feature>
<reference key="1">
    <citation type="journal article" date="1998" name="Nature">
        <title>Deciphering the biology of Mycobacterium tuberculosis from the complete genome sequence.</title>
        <authorList>
            <person name="Cole S.T."/>
            <person name="Brosch R."/>
            <person name="Parkhill J."/>
            <person name="Garnier T."/>
            <person name="Churcher C.M."/>
            <person name="Harris D.E."/>
            <person name="Gordon S.V."/>
            <person name="Eiglmeier K."/>
            <person name="Gas S."/>
            <person name="Barry C.E. III"/>
            <person name="Tekaia F."/>
            <person name="Badcock K."/>
            <person name="Basham D."/>
            <person name="Brown D."/>
            <person name="Chillingworth T."/>
            <person name="Connor R."/>
            <person name="Davies R.M."/>
            <person name="Devlin K."/>
            <person name="Feltwell T."/>
            <person name="Gentles S."/>
            <person name="Hamlin N."/>
            <person name="Holroyd S."/>
            <person name="Hornsby T."/>
            <person name="Jagels K."/>
            <person name="Krogh A."/>
            <person name="McLean J."/>
            <person name="Moule S."/>
            <person name="Murphy L.D."/>
            <person name="Oliver S."/>
            <person name="Osborne J."/>
            <person name="Quail M.A."/>
            <person name="Rajandream M.A."/>
            <person name="Rogers J."/>
            <person name="Rutter S."/>
            <person name="Seeger K."/>
            <person name="Skelton S."/>
            <person name="Squares S."/>
            <person name="Squares R."/>
            <person name="Sulston J.E."/>
            <person name="Taylor K."/>
            <person name="Whitehead S."/>
            <person name="Barrell B.G."/>
        </authorList>
    </citation>
    <scope>NUCLEOTIDE SEQUENCE [LARGE SCALE GENOMIC DNA]</scope>
    <source>
        <strain>ATCC 25618 / H37Rv</strain>
    </source>
</reference>
<reference key="2">
    <citation type="journal article" date="2011" name="Mol. Cell. Proteomics">
        <title>Proteogenomic analysis of Mycobacterium tuberculosis by high resolution mass spectrometry.</title>
        <authorList>
            <person name="Kelkar D.S."/>
            <person name="Kumar D."/>
            <person name="Kumar P."/>
            <person name="Balakrishnan L."/>
            <person name="Muthusamy B."/>
            <person name="Yadav A.K."/>
            <person name="Shrivastava P."/>
            <person name="Marimuthu A."/>
            <person name="Anand S."/>
            <person name="Sundaram H."/>
            <person name="Kingsbury R."/>
            <person name="Harsha H.C."/>
            <person name="Nair B."/>
            <person name="Prasad T.S."/>
            <person name="Chauhan D.S."/>
            <person name="Katoch K."/>
            <person name="Katoch V.M."/>
            <person name="Kumar P."/>
            <person name="Chaerkady R."/>
            <person name="Ramachandran S."/>
            <person name="Dash D."/>
            <person name="Pandey A."/>
        </authorList>
    </citation>
    <scope>IDENTIFICATION BY MASS SPECTROMETRY [LARGE SCALE ANALYSIS]</scope>
    <source>
        <strain>ATCC 25618 / H37Rv</strain>
    </source>
</reference>
<proteinExistence type="evidence at protein level"/>
<evidence type="ECO:0000250" key="1"/>
<evidence type="ECO:0000305" key="2"/>